<keyword id="KW-0066">ATP synthesis</keyword>
<keyword id="KW-0997">Cell inner membrane</keyword>
<keyword id="KW-1003">Cell membrane</keyword>
<keyword id="KW-0139">CF(1)</keyword>
<keyword id="KW-0375">Hydrogen ion transport</keyword>
<keyword id="KW-0406">Ion transport</keyword>
<keyword id="KW-0472">Membrane</keyword>
<keyword id="KW-0813">Transport</keyword>
<reference key="1">
    <citation type="submission" date="2009-03" db="EMBL/GenBank/DDBJ databases">
        <title>Brucella melitensis ATCC 23457 whole genome shotgun sequencing project.</title>
        <authorList>
            <person name="Setubal J.C."/>
            <person name="Boyle S."/>
            <person name="Crasta O.R."/>
            <person name="Gillespie J.J."/>
            <person name="Kenyon R.W."/>
            <person name="Lu J."/>
            <person name="Mane S."/>
            <person name="Nagrani S."/>
            <person name="Shallom J.M."/>
            <person name="Shallom S."/>
            <person name="Shukla M."/>
            <person name="Snyder E.E."/>
            <person name="Sobral B.W."/>
            <person name="Wattam A.R."/>
            <person name="Will R."/>
            <person name="Williams K."/>
            <person name="Yoo H."/>
            <person name="Munk C."/>
            <person name="Tapia R."/>
            <person name="Han C."/>
            <person name="Detter J.C."/>
            <person name="Bruce D."/>
            <person name="Brettin T.S."/>
        </authorList>
    </citation>
    <scope>NUCLEOTIDE SEQUENCE [LARGE SCALE GENOMIC DNA]</scope>
    <source>
        <strain>ATCC 23457</strain>
    </source>
</reference>
<accession>C0RF51</accession>
<gene>
    <name evidence="1" type="primary">atpG</name>
    <name type="ordered locus">BMEA_A1850</name>
</gene>
<protein>
    <recommendedName>
        <fullName evidence="1">ATP synthase gamma chain</fullName>
    </recommendedName>
    <alternativeName>
        <fullName evidence="1">ATP synthase F1 sector gamma subunit</fullName>
    </alternativeName>
    <alternativeName>
        <fullName evidence="1">F-ATPase gamma subunit</fullName>
    </alternativeName>
</protein>
<proteinExistence type="inferred from homology"/>
<organism>
    <name type="scientific">Brucella melitensis biotype 2 (strain ATCC 23457)</name>
    <dbReference type="NCBI Taxonomy" id="546272"/>
    <lineage>
        <taxon>Bacteria</taxon>
        <taxon>Pseudomonadati</taxon>
        <taxon>Pseudomonadota</taxon>
        <taxon>Alphaproteobacteria</taxon>
        <taxon>Hyphomicrobiales</taxon>
        <taxon>Brucellaceae</taxon>
        <taxon>Brucella/Ochrobactrum group</taxon>
        <taxon>Brucella</taxon>
    </lineage>
</organism>
<feature type="chain" id="PRO_1000148604" description="ATP synthase gamma chain">
    <location>
        <begin position="1"/>
        <end position="292"/>
    </location>
</feature>
<name>ATPG_BRUMB</name>
<comment type="function">
    <text evidence="1">Produces ATP from ADP in the presence of a proton gradient across the membrane. The gamma chain is believed to be important in regulating ATPase activity and the flow of protons through the CF(0) complex.</text>
</comment>
<comment type="subunit">
    <text evidence="1">F-type ATPases have 2 components, CF(1) - the catalytic core - and CF(0) - the membrane proton channel. CF(1) has five subunits: alpha(3), beta(3), gamma(1), delta(1), epsilon(1). CF(0) has three main subunits: a, b and c.</text>
</comment>
<comment type="subcellular location">
    <subcellularLocation>
        <location evidence="1">Cell inner membrane</location>
        <topology evidence="1">Peripheral membrane protein</topology>
    </subcellularLocation>
</comment>
<comment type="similarity">
    <text evidence="1">Belongs to the ATPase gamma chain family.</text>
</comment>
<dbReference type="EMBL" id="CP001488">
    <property type="protein sequence ID" value="ACO01523.1"/>
    <property type="molecule type" value="Genomic_DNA"/>
</dbReference>
<dbReference type="RefSeq" id="WP_002964877.1">
    <property type="nucleotide sequence ID" value="NC_012441.1"/>
</dbReference>
<dbReference type="SMR" id="C0RF51"/>
<dbReference type="KEGG" id="bmi:BMEA_A1850"/>
<dbReference type="HOGENOM" id="CLU_050669_0_1_5"/>
<dbReference type="Proteomes" id="UP000001748">
    <property type="component" value="Chromosome I"/>
</dbReference>
<dbReference type="GO" id="GO:0005886">
    <property type="term" value="C:plasma membrane"/>
    <property type="evidence" value="ECO:0007669"/>
    <property type="project" value="UniProtKB-SubCell"/>
</dbReference>
<dbReference type="GO" id="GO:0045259">
    <property type="term" value="C:proton-transporting ATP synthase complex"/>
    <property type="evidence" value="ECO:0007669"/>
    <property type="project" value="UniProtKB-KW"/>
</dbReference>
<dbReference type="GO" id="GO:0005524">
    <property type="term" value="F:ATP binding"/>
    <property type="evidence" value="ECO:0007669"/>
    <property type="project" value="UniProtKB-UniRule"/>
</dbReference>
<dbReference type="GO" id="GO:0046933">
    <property type="term" value="F:proton-transporting ATP synthase activity, rotational mechanism"/>
    <property type="evidence" value="ECO:0007669"/>
    <property type="project" value="UniProtKB-UniRule"/>
</dbReference>
<dbReference type="GO" id="GO:0042777">
    <property type="term" value="P:proton motive force-driven plasma membrane ATP synthesis"/>
    <property type="evidence" value="ECO:0007669"/>
    <property type="project" value="UniProtKB-UniRule"/>
</dbReference>
<dbReference type="CDD" id="cd12151">
    <property type="entry name" value="F1-ATPase_gamma"/>
    <property type="match status" value="1"/>
</dbReference>
<dbReference type="FunFam" id="1.10.287.80:FF:000001">
    <property type="entry name" value="ATP synthase gamma chain"/>
    <property type="match status" value="1"/>
</dbReference>
<dbReference type="FunFam" id="1.10.287.80:FF:000003">
    <property type="entry name" value="ATP synthase gamma chain, chloroplastic"/>
    <property type="match status" value="1"/>
</dbReference>
<dbReference type="Gene3D" id="3.40.1380.10">
    <property type="match status" value="1"/>
</dbReference>
<dbReference type="Gene3D" id="1.10.287.80">
    <property type="entry name" value="ATP synthase, gamma subunit, helix hairpin domain"/>
    <property type="match status" value="1"/>
</dbReference>
<dbReference type="HAMAP" id="MF_00815">
    <property type="entry name" value="ATP_synth_gamma_bact"/>
    <property type="match status" value="1"/>
</dbReference>
<dbReference type="InterPro" id="IPR035968">
    <property type="entry name" value="ATP_synth_F1_ATPase_gsu"/>
</dbReference>
<dbReference type="InterPro" id="IPR000131">
    <property type="entry name" value="ATP_synth_F1_gsu"/>
</dbReference>
<dbReference type="InterPro" id="IPR023632">
    <property type="entry name" value="ATP_synth_F1_gsu_CS"/>
</dbReference>
<dbReference type="NCBIfam" id="TIGR01146">
    <property type="entry name" value="ATPsyn_F1gamma"/>
    <property type="match status" value="1"/>
</dbReference>
<dbReference type="NCBIfam" id="NF004146">
    <property type="entry name" value="PRK05621.1-4"/>
    <property type="match status" value="1"/>
</dbReference>
<dbReference type="PANTHER" id="PTHR11693">
    <property type="entry name" value="ATP SYNTHASE GAMMA CHAIN"/>
    <property type="match status" value="1"/>
</dbReference>
<dbReference type="PANTHER" id="PTHR11693:SF22">
    <property type="entry name" value="ATP SYNTHASE SUBUNIT GAMMA, MITOCHONDRIAL"/>
    <property type="match status" value="1"/>
</dbReference>
<dbReference type="Pfam" id="PF00231">
    <property type="entry name" value="ATP-synt"/>
    <property type="match status" value="1"/>
</dbReference>
<dbReference type="PIRSF" id="PIRSF039089">
    <property type="entry name" value="ATP_synthase_gamma"/>
    <property type="match status" value="1"/>
</dbReference>
<dbReference type="PRINTS" id="PR00126">
    <property type="entry name" value="ATPASEGAMMA"/>
</dbReference>
<dbReference type="SUPFAM" id="SSF52943">
    <property type="entry name" value="ATP synthase (F1-ATPase), gamma subunit"/>
    <property type="match status" value="1"/>
</dbReference>
<dbReference type="PROSITE" id="PS00153">
    <property type="entry name" value="ATPASE_GAMMA"/>
    <property type="match status" value="1"/>
</dbReference>
<sequence>MPSLKDLRNRIASVKATQKITKAMQMVAAAKLRRAQEAAEAARPYSQRMGAVLANIAQNVSGEDAPALMVGTGKDDVHLLVVCTAKRGLCGGFNSQIARLARDHARKLLAEGKTVKIITVGKKGADILRREFSALLHDHVDLREVKQLAFVHADQIGHKIIKLFEEGAFDVCTLFYSEFKSVISQVSTAQQLIPASADNEAEMETAGDAIYEYEPDPAAILSTLIPRNISVQIFRALLENVAGEMGAKMSAMDNATRNAGDMINKLSITYNRQRQAQITKELIEIISGAEAL</sequence>
<evidence type="ECO:0000255" key="1">
    <source>
        <dbReference type="HAMAP-Rule" id="MF_00815"/>
    </source>
</evidence>